<comment type="function">
    <text evidence="1">Has antimicrobial activity.</text>
</comment>
<comment type="subcellular location">
    <subcellularLocation>
        <location evidence="1">Secreted</location>
    </subcellularLocation>
</comment>
<comment type="similarity">
    <text evidence="3">Belongs to the beta-defensin family.</text>
</comment>
<gene>
    <name type="primary">DEFB105A</name>
    <name type="synonym">DEFB105</name>
</gene>
<evidence type="ECO:0000250" key="1"/>
<evidence type="ECO:0000255" key="2"/>
<evidence type="ECO:0000305" key="3"/>
<name>D105A_PONPY</name>
<organism>
    <name type="scientific">Pongo pygmaeus</name>
    <name type="common">Bornean orangutan</name>
    <dbReference type="NCBI Taxonomy" id="9600"/>
    <lineage>
        <taxon>Eukaryota</taxon>
        <taxon>Metazoa</taxon>
        <taxon>Chordata</taxon>
        <taxon>Craniata</taxon>
        <taxon>Vertebrata</taxon>
        <taxon>Euteleostomi</taxon>
        <taxon>Mammalia</taxon>
        <taxon>Eutheria</taxon>
        <taxon>Euarchontoglires</taxon>
        <taxon>Primates</taxon>
        <taxon>Haplorrhini</taxon>
        <taxon>Catarrhini</taxon>
        <taxon>Hominidae</taxon>
        <taxon>Pongo</taxon>
    </lineage>
</organism>
<accession>A4H207</accession>
<sequence>MALIRKTFYFLFAVFFVLVQLPSECQAGLDFSQPFPSDEFAVCESCKLGRGKCRKECLENEKPDGNCRLNFLCCRERI</sequence>
<dbReference type="EMBL" id="AM410112">
    <property type="protein sequence ID" value="CAL68927.1"/>
    <property type="molecule type" value="Genomic_DNA"/>
</dbReference>
<dbReference type="SMR" id="A4H207"/>
<dbReference type="GO" id="GO:0005576">
    <property type="term" value="C:extracellular region"/>
    <property type="evidence" value="ECO:0007669"/>
    <property type="project" value="UniProtKB-SubCell"/>
</dbReference>
<dbReference type="GO" id="GO:0042742">
    <property type="term" value="P:defense response to bacterium"/>
    <property type="evidence" value="ECO:0007669"/>
    <property type="project" value="UniProtKB-KW"/>
</dbReference>
<dbReference type="GO" id="GO:0045087">
    <property type="term" value="P:innate immune response"/>
    <property type="evidence" value="ECO:0007669"/>
    <property type="project" value="InterPro"/>
</dbReference>
<dbReference type="InterPro" id="IPR025933">
    <property type="entry name" value="Beta_defensin_dom"/>
</dbReference>
<dbReference type="Pfam" id="PF13841">
    <property type="entry name" value="Defensin_beta_2"/>
    <property type="match status" value="1"/>
</dbReference>
<reference key="1">
    <citation type="submission" date="2006-11" db="EMBL/GenBank/DDBJ databases">
        <title>Evolution and sequence variation of human beta-defensin genes.</title>
        <authorList>
            <person name="Hollox E.J."/>
            <person name="Armour J.A.L."/>
        </authorList>
    </citation>
    <scope>NUCLEOTIDE SEQUENCE [GENOMIC DNA]</scope>
</reference>
<keyword id="KW-0044">Antibiotic</keyword>
<keyword id="KW-0929">Antimicrobial</keyword>
<keyword id="KW-0211">Defensin</keyword>
<keyword id="KW-1015">Disulfide bond</keyword>
<keyword id="KW-0964">Secreted</keyword>
<keyword id="KW-0732">Signal</keyword>
<protein>
    <recommendedName>
        <fullName>Beta-defensin 105A</fullName>
    </recommendedName>
    <alternativeName>
        <fullName>Defensin, beta 105</fullName>
    </alternativeName>
    <alternativeName>
        <fullName>Defensin, beta 105A</fullName>
    </alternativeName>
</protein>
<feature type="signal peptide" evidence="2">
    <location>
        <begin position="1"/>
        <end position="27"/>
    </location>
</feature>
<feature type="peptide" id="PRO_0000289814" description="Beta-defensin 105A">
    <location>
        <begin position="28"/>
        <end position="78"/>
    </location>
</feature>
<feature type="disulfide bond" evidence="1">
    <location>
        <begin position="43"/>
        <end position="74"/>
    </location>
</feature>
<feature type="disulfide bond" evidence="1">
    <location>
        <begin position="53"/>
        <end position="67"/>
    </location>
</feature>
<feature type="disulfide bond" evidence="1">
    <location>
        <begin position="57"/>
        <end position="73"/>
    </location>
</feature>
<proteinExistence type="inferred from homology"/>